<proteinExistence type="inferred from homology"/>
<reference key="1">
    <citation type="journal article" date="2005" name="Nucleic Acids Res.">
        <title>Genomic blueprint of Hahella chejuensis, a marine microbe producing an algicidal agent.</title>
        <authorList>
            <person name="Jeong H."/>
            <person name="Yim J.H."/>
            <person name="Lee C."/>
            <person name="Choi S.-H."/>
            <person name="Park Y.K."/>
            <person name="Yoon S.H."/>
            <person name="Hur C.-G."/>
            <person name="Kang H.-Y."/>
            <person name="Kim D."/>
            <person name="Lee H.H."/>
            <person name="Park K.H."/>
            <person name="Park S.-H."/>
            <person name="Park H.-S."/>
            <person name="Lee H.K."/>
            <person name="Oh T.K."/>
            <person name="Kim J.F."/>
        </authorList>
    </citation>
    <scope>NUCLEOTIDE SEQUENCE [LARGE SCALE GENOMIC DNA]</scope>
    <source>
        <strain>KCTC 2396</strain>
    </source>
</reference>
<sequence>MRVIIADSPEAVARMGAEQCIRLLQDKPAAVLGLATGSTPIALYAHLIQRRQQGEVSFHQVRTFNLDEYIGIAPQHPQSYRSFMQKQLFDHIDVLPENTHIPNGMGDPIAESRAYEDKIHSAGGIDLQILGLGRNGHIGFNEPTSSLSSRTRAKTLTQETIRDNSRFFSADEEQPHLAITMGIGTILDARKIMLLAAGAAKADAVKAMVEGPISAMHPASALQMHPSALVIVDTDAASKLELIDYYRWVQSETLRVQGAYL</sequence>
<accession>Q2S6X5</accession>
<feature type="chain" id="PRO_1000066988" description="Glucosamine-6-phosphate deaminase">
    <location>
        <begin position="1"/>
        <end position="261"/>
    </location>
</feature>
<feature type="active site" description="Proton acceptor; for enolization step" evidence="1">
    <location>
        <position position="67"/>
    </location>
</feature>
<feature type="active site" description="For ring-opening step" evidence="1">
    <location>
        <position position="135"/>
    </location>
</feature>
<feature type="active site" description="Proton acceptor; for ring-opening step" evidence="1">
    <location>
        <position position="137"/>
    </location>
</feature>
<feature type="active site" description="For ring-opening step" evidence="1">
    <location>
        <position position="142"/>
    </location>
</feature>
<name>NAGB_HAHCH</name>
<dbReference type="EC" id="3.5.99.6" evidence="1"/>
<dbReference type="EMBL" id="CP000155">
    <property type="protein sequence ID" value="ABC33599.1"/>
    <property type="molecule type" value="Genomic_DNA"/>
</dbReference>
<dbReference type="RefSeq" id="WP_011400649.1">
    <property type="nucleotide sequence ID" value="NC_007645.1"/>
</dbReference>
<dbReference type="SMR" id="Q2S6X5"/>
<dbReference type="STRING" id="349521.HCH_06984"/>
<dbReference type="KEGG" id="hch:HCH_06984"/>
<dbReference type="eggNOG" id="COG0363">
    <property type="taxonomic scope" value="Bacteria"/>
</dbReference>
<dbReference type="HOGENOM" id="CLU_049611_1_1_6"/>
<dbReference type="OrthoDB" id="9791139at2"/>
<dbReference type="UniPathway" id="UPA00629">
    <property type="reaction ID" value="UER00684"/>
</dbReference>
<dbReference type="Proteomes" id="UP000000238">
    <property type="component" value="Chromosome"/>
</dbReference>
<dbReference type="GO" id="GO:0005737">
    <property type="term" value="C:cytoplasm"/>
    <property type="evidence" value="ECO:0007669"/>
    <property type="project" value="TreeGrafter"/>
</dbReference>
<dbReference type="GO" id="GO:0004342">
    <property type="term" value="F:glucosamine-6-phosphate deaminase activity"/>
    <property type="evidence" value="ECO:0007669"/>
    <property type="project" value="UniProtKB-UniRule"/>
</dbReference>
<dbReference type="GO" id="GO:0042802">
    <property type="term" value="F:identical protein binding"/>
    <property type="evidence" value="ECO:0007669"/>
    <property type="project" value="TreeGrafter"/>
</dbReference>
<dbReference type="GO" id="GO:0005975">
    <property type="term" value="P:carbohydrate metabolic process"/>
    <property type="evidence" value="ECO:0007669"/>
    <property type="project" value="InterPro"/>
</dbReference>
<dbReference type="GO" id="GO:0006043">
    <property type="term" value="P:glucosamine catabolic process"/>
    <property type="evidence" value="ECO:0007669"/>
    <property type="project" value="TreeGrafter"/>
</dbReference>
<dbReference type="GO" id="GO:0006046">
    <property type="term" value="P:N-acetylglucosamine catabolic process"/>
    <property type="evidence" value="ECO:0007669"/>
    <property type="project" value="TreeGrafter"/>
</dbReference>
<dbReference type="GO" id="GO:0019262">
    <property type="term" value="P:N-acetylneuraminate catabolic process"/>
    <property type="evidence" value="ECO:0007669"/>
    <property type="project" value="UniProtKB-UniRule"/>
</dbReference>
<dbReference type="CDD" id="cd01399">
    <property type="entry name" value="GlcN6P_deaminase"/>
    <property type="match status" value="1"/>
</dbReference>
<dbReference type="FunFam" id="3.40.50.1360:FF:000003">
    <property type="entry name" value="Glucosamine-6-phosphate deaminase"/>
    <property type="match status" value="1"/>
</dbReference>
<dbReference type="Gene3D" id="3.40.50.1360">
    <property type="match status" value="1"/>
</dbReference>
<dbReference type="HAMAP" id="MF_01241">
    <property type="entry name" value="GlcN6P_deamin"/>
    <property type="match status" value="1"/>
</dbReference>
<dbReference type="InterPro" id="IPR006148">
    <property type="entry name" value="Glc/Gal-6P_isomerase"/>
</dbReference>
<dbReference type="InterPro" id="IPR004547">
    <property type="entry name" value="Glucosamine6P_isomerase"/>
</dbReference>
<dbReference type="InterPro" id="IPR018321">
    <property type="entry name" value="Glucosamine6P_isomerase_CS"/>
</dbReference>
<dbReference type="InterPro" id="IPR037171">
    <property type="entry name" value="NagB/RpiA_transferase-like"/>
</dbReference>
<dbReference type="NCBIfam" id="TIGR00502">
    <property type="entry name" value="nagB"/>
    <property type="match status" value="1"/>
</dbReference>
<dbReference type="NCBIfam" id="NF001684">
    <property type="entry name" value="PRK00443.1-4"/>
    <property type="match status" value="1"/>
</dbReference>
<dbReference type="PANTHER" id="PTHR11280">
    <property type="entry name" value="GLUCOSAMINE-6-PHOSPHATE ISOMERASE"/>
    <property type="match status" value="1"/>
</dbReference>
<dbReference type="PANTHER" id="PTHR11280:SF5">
    <property type="entry name" value="GLUCOSAMINE-6-PHOSPHATE ISOMERASE"/>
    <property type="match status" value="1"/>
</dbReference>
<dbReference type="Pfam" id="PF01182">
    <property type="entry name" value="Glucosamine_iso"/>
    <property type="match status" value="1"/>
</dbReference>
<dbReference type="SUPFAM" id="SSF100950">
    <property type="entry name" value="NagB/RpiA/CoA transferase-like"/>
    <property type="match status" value="1"/>
</dbReference>
<dbReference type="PROSITE" id="PS01161">
    <property type="entry name" value="GLC_GALNAC_ISOMERASE"/>
    <property type="match status" value="1"/>
</dbReference>
<keyword id="KW-0119">Carbohydrate metabolism</keyword>
<keyword id="KW-0378">Hydrolase</keyword>
<keyword id="KW-1185">Reference proteome</keyword>
<comment type="function">
    <text evidence="1">Catalyzes the reversible isomerization-deamination of glucosamine 6-phosphate (GlcN6P) to form fructose 6-phosphate (Fru6P) and ammonium ion.</text>
</comment>
<comment type="catalytic activity">
    <reaction evidence="1">
        <text>alpha-D-glucosamine 6-phosphate + H2O = beta-D-fructose 6-phosphate + NH4(+)</text>
        <dbReference type="Rhea" id="RHEA:12172"/>
        <dbReference type="ChEBI" id="CHEBI:15377"/>
        <dbReference type="ChEBI" id="CHEBI:28938"/>
        <dbReference type="ChEBI" id="CHEBI:57634"/>
        <dbReference type="ChEBI" id="CHEBI:75989"/>
        <dbReference type="EC" id="3.5.99.6"/>
    </reaction>
</comment>
<comment type="pathway">
    <text evidence="1">Amino-sugar metabolism; N-acetylneuraminate degradation; D-fructose 6-phosphate from N-acetylneuraminate: step 5/5.</text>
</comment>
<comment type="subunit">
    <text evidence="1">Homohexamer.</text>
</comment>
<comment type="similarity">
    <text evidence="1">Belongs to the glucosamine/galactosamine-6-phosphate isomerase family. NagB subfamily.</text>
</comment>
<gene>
    <name evidence="1" type="primary">nagB</name>
    <name type="ordered locus">HCH_06984</name>
</gene>
<protein>
    <recommendedName>
        <fullName evidence="1">Glucosamine-6-phosphate deaminase</fullName>
        <ecNumber evidence="1">3.5.99.6</ecNumber>
    </recommendedName>
    <alternativeName>
        <fullName evidence="1">GlcN6P deaminase</fullName>
        <shortName evidence="1">GNPDA</shortName>
    </alternativeName>
    <alternativeName>
        <fullName evidence="1">Glucosamine-6-phosphate isomerase</fullName>
    </alternativeName>
</protein>
<organism>
    <name type="scientific">Hahella chejuensis (strain KCTC 2396)</name>
    <dbReference type="NCBI Taxonomy" id="349521"/>
    <lineage>
        <taxon>Bacteria</taxon>
        <taxon>Pseudomonadati</taxon>
        <taxon>Pseudomonadota</taxon>
        <taxon>Gammaproteobacteria</taxon>
        <taxon>Oceanospirillales</taxon>
        <taxon>Hahellaceae</taxon>
        <taxon>Hahella</taxon>
    </lineage>
</organism>
<evidence type="ECO:0000255" key="1">
    <source>
        <dbReference type="HAMAP-Rule" id="MF_01241"/>
    </source>
</evidence>